<sequence>MTALISQPDLLPPPAPERCPPQQTARLFRETPLLLDCGQVVQDVRVAYHTYGTPSDHAILVLHALTGTSAVHEWWPDFLGEGKPLDPTRDYIVCANVLGGCAGSTGPAELPRVNGEDPPLTLRDMARVGRALLEELGVRRVSVIGASMGGMLAYAWLLECPDLVDRAVIIGAPARHSPWAIGLNTAARNAIRAAPGGEGLKVARQIAMLSYRSPESFALTQSGWGTRRPGTPDITTYLEHQGEKLSTRFCERSYLALTGAMDRFQPTDAELRSIRVPVLVVGISSDVLYPPAEVRTYAGLLPRGQYLELQSPHGHDAFLIDPQGLPEAAAAFLHGA</sequence>
<feature type="chain" id="PRO_0000440279" description="Homoserine O-acetyltransferase">
    <location>
        <begin position="1"/>
        <end position="336"/>
    </location>
</feature>
<feature type="domain" description="AB hydrolase-1" evidence="1">
    <location>
        <begin position="58"/>
        <end position="321"/>
    </location>
</feature>
<feature type="active site" description="Nucleophile" evidence="1">
    <location>
        <position position="147"/>
    </location>
</feature>
<feature type="active site" evidence="1">
    <location>
        <position position="286"/>
    </location>
</feature>
<feature type="active site" evidence="1">
    <location>
        <position position="315"/>
    </location>
</feature>
<feature type="binding site" evidence="1">
    <location>
        <position position="204"/>
    </location>
    <ligand>
        <name>substrate</name>
    </ligand>
</feature>
<feature type="binding site" evidence="1">
    <location>
        <position position="316"/>
    </location>
    <ligand>
        <name>substrate</name>
    </ligand>
</feature>
<gene>
    <name evidence="1 3" type="primary">metXA</name>
    <name evidence="4" type="ordered locus">Dgeo_0517</name>
</gene>
<keyword id="KW-0012">Acyltransferase</keyword>
<keyword id="KW-0028">Amino-acid biosynthesis</keyword>
<keyword id="KW-0963">Cytoplasm</keyword>
<keyword id="KW-0486">Methionine biosynthesis</keyword>
<keyword id="KW-0808">Transferase</keyword>
<accession>Q1J115</accession>
<reference key="1">
    <citation type="submission" date="2006-04" db="EMBL/GenBank/DDBJ databases">
        <title>Complete sequence of chromosome of Deinococcus geothermalis DSM 11300.</title>
        <authorList>
            <person name="Copeland A."/>
            <person name="Lucas S."/>
            <person name="Lapidus A."/>
            <person name="Barry K."/>
            <person name="Detter J.C."/>
            <person name="Glavina del Rio T."/>
            <person name="Hammon N."/>
            <person name="Israni S."/>
            <person name="Dalin E."/>
            <person name="Tice H."/>
            <person name="Pitluck S."/>
            <person name="Brettin T."/>
            <person name="Bruce D."/>
            <person name="Han C."/>
            <person name="Tapia R."/>
            <person name="Saunders E."/>
            <person name="Gilna P."/>
            <person name="Schmutz J."/>
            <person name="Larimer F."/>
            <person name="Land M."/>
            <person name="Hauser L."/>
            <person name="Kyrpides N."/>
            <person name="Kim E."/>
            <person name="Daly M.J."/>
            <person name="Fredrickson J.K."/>
            <person name="Makarova K.S."/>
            <person name="Gaidamakova E.K."/>
            <person name="Zhai M."/>
            <person name="Richardson P."/>
        </authorList>
    </citation>
    <scope>NUCLEOTIDE SEQUENCE [LARGE SCALE GENOMIC DNA]</scope>
    <source>
        <strain>DSM 11300 / CIP 105573 / AG-3a</strain>
    </source>
</reference>
<reference key="2">
    <citation type="journal article" date="2017" name="Nat. Chem. Biol.">
        <title>Parallel evolution of non-homologous isofunctional enzymes in methionine biosynthesis.</title>
        <authorList>
            <person name="Bastard K."/>
            <person name="Perret A."/>
            <person name="Mariage A."/>
            <person name="Bessonnet T."/>
            <person name="Pinet-Turpault A."/>
            <person name="Petit J.L."/>
            <person name="Darii E."/>
            <person name="Bazire P."/>
            <person name="Vergne-Vaxelaire C."/>
            <person name="Brewee C."/>
            <person name="Debard A."/>
            <person name="Pellouin V."/>
            <person name="Besnard-Gonnet M."/>
            <person name="Artiguenave F."/>
            <person name="Medigue C."/>
            <person name="Vallenet D."/>
            <person name="Danchin A."/>
            <person name="Zaparucha A."/>
            <person name="Weissenbach J."/>
            <person name="Salanoubat M."/>
            <person name="de Berardinis V."/>
        </authorList>
    </citation>
    <scope>FUNCTION</scope>
    <scope>CATALYTIC ACTIVITY</scope>
</reference>
<proteinExistence type="evidence at protein level"/>
<organism>
    <name type="scientific">Deinococcus geothermalis (strain DSM 11300 / CIP 105573 / AG-3a)</name>
    <dbReference type="NCBI Taxonomy" id="319795"/>
    <lineage>
        <taxon>Bacteria</taxon>
        <taxon>Thermotogati</taxon>
        <taxon>Deinococcota</taxon>
        <taxon>Deinococci</taxon>
        <taxon>Deinococcales</taxon>
        <taxon>Deinococcaceae</taxon>
        <taxon>Deinococcus</taxon>
    </lineage>
</organism>
<dbReference type="EC" id="2.3.1.31" evidence="1 2"/>
<dbReference type="EMBL" id="CP000359">
    <property type="protein sequence ID" value="ABF44819.1"/>
    <property type="molecule type" value="Genomic_DNA"/>
</dbReference>
<dbReference type="RefSeq" id="WP_011529661.1">
    <property type="nucleotide sequence ID" value="NC_008025.1"/>
</dbReference>
<dbReference type="SMR" id="Q1J115"/>
<dbReference type="STRING" id="319795.Dgeo_0517"/>
<dbReference type="ESTHER" id="deigd-q1j115">
    <property type="family name" value="Homoserine_transacetylase"/>
</dbReference>
<dbReference type="KEGG" id="dge:Dgeo_0517"/>
<dbReference type="eggNOG" id="COG2021">
    <property type="taxonomic scope" value="Bacteria"/>
</dbReference>
<dbReference type="HOGENOM" id="CLU_028760_1_2_0"/>
<dbReference type="UniPathway" id="UPA00051">
    <property type="reaction ID" value="UER00074"/>
</dbReference>
<dbReference type="Proteomes" id="UP000002431">
    <property type="component" value="Chromosome"/>
</dbReference>
<dbReference type="GO" id="GO:0005737">
    <property type="term" value="C:cytoplasm"/>
    <property type="evidence" value="ECO:0007669"/>
    <property type="project" value="UniProtKB-SubCell"/>
</dbReference>
<dbReference type="GO" id="GO:0004414">
    <property type="term" value="F:homoserine O-acetyltransferase activity"/>
    <property type="evidence" value="ECO:0007669"/>
    <property type="project" value="UniProtKB-UniRule"/>
</dbReference>
<dbReference type="GO" id="GO:0009092">
    <property type="term" value="P:homoserine metabolic process"/>
    <property type="evidence" value="ECO:0007669"/>
    <property type="project" value="TreeGrafter"/>
</dbReference>
<dbReference type="GO" id="GO:0009086">
    <property type="term" value="P:methionine biosynthetic process"/>
    <property type="evidence" value="ECO:0007669"/>
    <property type="project" value="UniProtKB-UniRule"/>
</dbReference>
<dbReference type="Gene3D" id="3.40.50.1820">
    <property type="entry name" value="alpha/beta hydrolase"/>
    <property type="match status" value="1"/>
</dbReference>
<dbReference type="HAMAP" id="MF_00296">
    <property type="entry name" value="MetX_acyltransf"/>
    <property type="match status" value="1"/>
</dbReference>
<dbReference type="InterPro" id="IPR000073">
    <property type="entry name" value="AB_hydrolase_1"/>
</dbReference>
<dbReference type="InterPro" id="IPR029058">
    <property type="entry name" value="AB_hydrolase_fold"/>
</dbReference>
<dbReference type="InterPro" id="IPR008220">
    <property type="entry name" value="HAT_MetX-like"/>
</dbReference>
<dbReference type="PANTHER" id="PTHR32268">
    <property type="entry name" value="HOMOSERINE O-ACETYLTRANSFERASE"/>
    <property type="match status" value="1"/>
</dbReference>
<dbReference type="PANTHER" id="PTHR32268:SF11">
    <property type="entry name" value="HOMOSERINE O-ACETYLTRANSFERASE"/>
    <property type="match status" value="1"/>
</dbReference>
<dbReference type="Pfam" id="PF00561">
    <property type="entry name" value="Abhydrolase_1"/>
    <property type="match status" value="1"/>
</dbReference>
<dbReference type="PIRSF" id="PIRSF000443">
    <property type="entry name" value="Homoser_Ac_trans"/>
    <property type="match status" value="1"/>
</dbReference>
<dbReference type="SUPFAM" id="SSF53474">
    <property type="entry name" value="alpha/beta-Hydrolases"/>
    <property type="match status" value="1"/>
</dbReference>
<evidence type="ECO:0000255" key="1">
    <source>
        <dbReference type="HAMAP-Rule" id="MF_00296"/>
    </source>
</evidence>
<evidence type="ECO:0000269" key="2">
    <source>
    </source>
</evidence>
<evidence type="ECO:0000303" key="3">
    <source>
    </source>
</evidence>
<evidence type="ECO:0000312" key="4">
    <source>
        <dbReference type="EMBL" id="ABF44819.1"/>
    </source>
</evidence>
<protein>
    <recommendedName>
        <fullName evidence="1">Homoserine O-acetyltransferase</fullName>
        <shortName evidence="1 3">HAT</shortName>
        <ecNumber evidence="1 2">2.3.1.31</ecNumber>
    </recommendedName>
    <alternativeName>
        <fullName evidence="1">Homoserine transacetylase</fullName>
        <shortName evidence="1">HTA</shortName>
    </alternativeName>
</protein>
<name>METXA_DEIGD</name>
<comment type="function">
    <text evidence="1 2">Transfers an acetyl group from acetyl-CoA to L-homoserine, forming acetyl-L-homoserine.</text>
</comment>
<comment type="catalytic activity">
    <reaction evidence="1 2">
        <text>L-homoserine + acetyl-CoA = O-acetyl-L-homoserine + CoA</text>
        <dbReference type="Rhea" id="RHEA:13701"/>
        <dbReference type="ChEBI" id="CHEBI:57287"/>
        <dbReference type="ChEBI" id="CHEBI:57288"/>
        <dbReference type="ChEBI" id="CHEBI:57476"/>
        <dbReference type="ChEBI" id="CHEBI:57716"/>
        <dbReference type="EC" id="2.3.1.31"/>
    </reaction>
</comment>
<comment type="pathway">
    <text evidence="1">Amino-acid biosynthesis; L-methionine biosynthesis via de novo pathway; O-acetyl-L-homoserine from L-homoserine: step 1/1.</text>
</comment>
<comment type="subunit">
    <text evidence="1">Homodimer.</text>
</comment>
<comment type="subcellular location">
    <subcellularLocation>
        <location evidence="1">Cytoplasm</location>
    </subcellularLocation>
</comment>
<comment type="similarity">
    <text evidence="1">Belongs to the AB hydrolase superfamily. MetX family.</text>
</comment>